<accession>B6I5Q8</accession>
<proteinExistence type="inferred from homology"/>
<evidence type="ECO:0000255" key="1">
    <source>
        <dbReference type="HAMAP-Rule" id="MF_00015"/>
    </source>
</evidence>
<dbReference type="EC" id="3.4.21.88" evidence="1"/>
<dbReference type="EMBL" id="AP009240">
    <property type="protein sequence ID" value="BAG79859.1"/>
    <property type="molecule type" value="Genomic_DNA"/>
</dbReference>
<dbReference type="RefSeq" id="WP_000646078.1">
    <property type="nucleotide sequence ID" value="NC_011415.1"/>
</dbReference>
<dbReference type="SMR" id="B6I5Q8"/>
<dbReference type="MEROPS" id="S24.001"/>
<dbReference type="GeneID" id="93777788"/>
<dbReference type="KEGG" id="ecy:ECSE_4335"/>
<dbReference type="HOGENOM" id="CLU_066192_45_3_6"/>
<dbReference type="Proteomes" id="UP000008199">
    <property type="component" value="Chromosome"/>
</dbReference>
<dbReference type="GO" id="GO:0003677">
    <property type="term" value="F:DNA binding"/>
    <property type="evidence" value="ECO:0007669"/>
    <property type="project" value="UniProtKB-UniRule"/>
</dbReference>
<dbReference type="GO" id="GO:0004252">
    <property type="term" value="F:serine-type endopeptidase activity"/>
    <property type="evidence" value="ECO:0007669"/>
    <property type="project" value="UniProtKB-UniRule"/>
</dbReference>
<dbReference type="GO" id="GO:0006281">
    <property type="term" value="P:DNA repair"/>
    <property type="evidence" value="ECO:0007669"/>
    <property type="project" value="UniProtKB-UniRule"/>
</dbReference>
<dbReference type="GO" id="GO:0006260">
    <property type="term" value="P:DNA replication"/>
    <property type="evidence" value="ECO:0007669"/>
    <property type="project" value="UniProtKB-UniRule"/>
</dbReference>
<dbReference type="GO" id="GO:0045892">
    <property type="term" value="P:negative regulation of DNA-templated transcription"/>
    <property type="evidence" value="ECO:0007669"/>
    <property type="project" value="UniProtKB-UniRule"/>
</dbReference>
<dbReference type="GO" id="GO:0006508">
    <property type="term" value="P:proteolysis"/>
    <property type="evidence" value="ECO:0007669"/>
    <property type="project" value="InterPro"/>
</dbReference>
<dbReference type="GO" id="GO:0009432">
    <property type="term" value="P:SOS response"/>
    <property type="evidence" value="ECO:0007669"/>
    <property type="project" value="UniProtKB-UniRule"/>
</dbReference>
<dbReference type="CDD" id="cd06529">
    <property type="entry name" value="S24_LexA-like"/>
    <property type="match status" value="1"/>
</dbReference>
<dbReference type="FunFam" id="1.10.10.10:FF:000009">
    <property type="entry name" value="LexA repressor"/>
    <property type="match status" value="1"/>
</dbReference>
<dbReference type="FunFam" id="2.10.109.10:FF:000001">
    <property type="entry name" value="LexA repressor"/>
    <property type="match status" value="1"/>
</dbReference>
<dbReference type="Gene3D" id="2.10.109.10">
    <property type="entry name" value="Umud Fragment, subunit A"/>
    <property type="match status" value="1"/>
</dbReference>
<dbReference type="Gene3D" id="1.10.10.10">
    <property type="entry name" value="Winged helix-like DNA-binding domain superfamily/Winged helix DNA-binding domain"/>
    <property type="match status" value="1"/>
</dbReference>
<dbReference type="HAMAP" id="MF_00015">
    <property type="entry name" value="LexA"/>
    <property type="match status" value="1"/>
</dbReference>
<dbReference type="InterPro" id="IPR006200">
    <property type="entry name" value="LexA"/>
</dbReference>
<dbReference type="InterPro" id="IPR039418">
    <property type="entry name" value="LexA-like"/>
</dbReference>
<dbReference type="InterPro" id="IPR036286">
    <property type="entry name" value="LexA/Signal_pep-like_sf"/>
</dbReference>
<dbReference type="InterPro" id="IPR006199">
    <property type="entry name" value="LexA_DNA-bd_dom"/>
</dbReference>
<dbReference type="InterPro" id="IPR050077">
    <property type="entry name" value="LexA_repressor"/>
</dbReference>
<dbReference type="InterPro" id="IPR006197">
    <property type="entry name" value="Peptidase_S24_LexA"/>
</dbReference>
<dbReference type="InterPro" id="IPR015927">
    <property type="entry name" value="Peptidase_S24_S26A/B/C"/>
</dbReference>
<dbReference type="InterPro" id="IPR036388">
    <property type="entry name" value="WH-like_DNA-bd_sf"/>
</dbReference>
<dbReference type="InterPro" id="IPR036390">
    <property type="entry name" value="WH_DNA-bd_sf"/>
</dbReference>
<dbReference type="NCBIfam" id="TIGR00498">
    <property type="entry name" value="lexA"/>
    <property type="match status" value="1"/>
</dbReference>
<dbReference type="PANTHER" id="PTHR33516">
    <property type="entry name" value="LEXA REPRESSOR"/>
    <property type="match status" value="1"/>
</dbReference>
<dbReference type="PANTHER" id="PTHR33516:SF2">
    <property type="entry name" value="LEXA REPRESSOR-RELATED"/>
    <property type="match status" value="1"/>
</dbReference>
<dbReference type="Pfam" id="PF01726">
    <property type="entry name" value="LexA_DNA_bind"/>
    <property type="match status" value="1"/>
</dbReference>
<dbReference type="Pfam" id="PF00717">
    <property type="entry name" value="Peptidase_S24"/>
    <property type="match status" value="1"/>
</dbReference>
<dbReference type="PRINTS" id="PR00726">
    <property type="entry name" value="LEXASERPTASE"/>
</dbReference>
<dbReference type="SUPFAM" id="SSF51306">
    <property type="entry name" value="LexA/Signal peptidase"/>
    <property type="match status" value="1"/>
</dbReference>
<dbReference type="SUPFAM" id="SSF46785">
    <property type="entry name" value="Winged helix' DNA-binding domain"/>
    <property type="match status" value="1"/>
</dbReference>
<gene>
    <name evidence="1" type="primary">lexA</name>
    <name type="ordered locus">ECSE_4335</name>
</gene>
<organism>
    <name type="scientific">Escherichia coli (strain SE11)</name>
    <dbReference type="NCBI Taxonomy" id="409438"/>
    <lineage>
        <taxon>Bacteria</taxon>
        <taxon>Pseudomonadati</taxon>
        <taxon>Pseudomonadota</taxon>
        <taxon>Gammaproteobacteria</taxon>
        <taxon>Enterobacterales</taxon>
        <taxon>Enterobacteriaceae</taxon>
        <taxon>Escherichia</taxon>
    </lineage>
</organism>
<feature type="chain" id="PRO_1000089563" description="LexA repressor">
    <location>
        <begin position="1"/>
        <end position="202"/>
    </location>
</feature>
<feature type="DNA-binding region" description="H-T-H motif" evidence="1">
    <location>
        <begin position="28"/>
        <end position="48"/>
    </location>
</feature>
<feature type="active site" description="For autocatalytic cleavage activity" evidence="1">
    <location>
        <position position="119"/>
    </location>
</feature>
<feature type="active site" description="For autocatalytic cleavage activity" evidence="1">
    <location>
        <position position="156"/>
    </location>
</feature>
<feature type="site" description="Cleavage; by autolysis" evidence="1">
    <location>
        <begin position="84"/>
        <end position="85"/>
    </location>
</feature>
<keyword id="KW-0068">Autocatalytic cleavage</keyword>
<keyword id="KW-0227">DNA damage</keyword>
<keyword id="KW-0234">DNA repair</keyword>
<keyword id="KW-0235">DNA replication</keyword>
<keyword id="KW-0238">DNA-binding</keyword>
<keyword id="KW-0378">Hydrolase</keyword>
<keyword id="KW-0678">Repressor</keyword>
<keyword id="KW-0742">SOS response</keyword>
<keyword id="KW-0804">Transcription</keyword>
<keyword id="KW-0805">Transcription regulation</keyword>
<name>LEXA_ECOSE</name>
<protein>
    <recommendedName>
        <fullName evidence="1">LexA repressor</fullName>
        <ecNumber evidence="1">3.4.21.88</ecNumber>
    </recommendedName>
</protein>
<sequence>MKALTARQQEVFDLIRDHISQTGMPPTRAEIAQRLGFRSPNAAEEHLKALARKGVIEIVSGASRGIRLLQEEEEGLPLVGRVAAGEPLLAQQHIEGHYQVDPSLFKPNADFLLRVSGMSMKDIGIMDGDLLAVHKTQDVRNGQVVVARIDDEVTVKRLKKQGNKVELLPENSEFKPIVVDLRQQSFTIEGLAVGVIRNGDWL</sequence>
<reference key="1">
    <citation type="journal article" date="2008" name="DNA Res.">
        <title>Complete genome sequence and comparative analysis of the wild-type commensal Escherichia coli strain SE11 isolated from a healthy adult.</title>
        <authorList>
            <person name="Oshima K."/>
            <person name="Toh H."/>
            <person name="Ogura Y."/>
            <person name="Sasamoto H."/>
            <person name="Morita H."/>
            <person name="Park S.-H."/>
            <person name="Ooka T."/>
            <person name="Iyoda S."/>
            <person name="Taylor T.D."/>
            <person name="Hayashi T."/>
            <person name="Itoh K."/>
            <person name="Hattori M."/>
        </authorList>
    </citation>
    <scope>NUCLEOTIDE SEQUENCE [LARGE SCALE GENOMIC DNA]</scope>
    <source>
        <strain>SE11</strain>
    </source>
</reference>
<comment type="function">
    <text evidence="1">Represses a number of genes involved in the response to DNA damage (SOS response), including recA and lexA. Binds to the 16 bp palindromic sequence 5'-CTGTATATATATACAG-3'. In the presence of single-stranded DNA, RecA interacts with LexA causing an autocatalytic cleavage which disrupts the DNA-binding part of LexA, leading to derepression of the SOS regulon and eventually DNA repair.</text>
</comment>
<comment type="catalytic activity">
    <reaction evidence="1">
        <text>Hydrolysis of Ala-|-Gly bond in repressor LexA.</text>
        <dbReference type="EC" id="3.4.21.88"/>
    </reaction>
</comment>
<comment type="subunit">
    <text evidence="1">Homodimer.</text>
</comment>
<comment type="similarity">
    <text evidence="1">Belongs to the peptidase S24 family.</text>
</comment>